<name>RHAM_PARPJ</name>
<organism>
    <name type="scientific">Paraburkholderia phytofirmans (strain DSM 17436 / LMG 22146 / PsJN)</name>
    <name type="common">Burkholderia phytofirmans</name>
    <dbReference type="NCBI Taxonomy" id="398527"/>
    <lineage>
        <taxon>Bacteria</taxon>
        <taxon>Pseudomonadati</taxon>
        <taxon>Pseudomonadota</taxon>
        <taxon>Betaproteobacteria</taxon>
        <taxon>Burkholderiales</taxon>
        <taxon>Burkholderiaceae</taxon>
        <taxon>Paraburkholderia</taxon>
    </lineage>
</organism>
<proteinExistence type="inferred from homology"/>
<protein>
    <recommendedName>
        <fullName evidence="1">L-rhamnose mutarotase</fullName>
        <ecNumber evidence="1">5.1.3.32</ecNumber>
    </recommendedName>
    <alternativeName>
        <fullName evidence="1">Rhamnose 1-epimerase</fullName>
    </alternativeName>
    <alternativeName>
        <fullName evidence="1">Type-3 mutarotase</fullName>
    </alternativeName>
</protein>
<sequence>METIAFRMVLNPGMREEYERRHAQIWPELVDALHNAGVRDYRIFFDPDSNHLFAILTRNSHHTMDELPQLDVMRKWWDYMADIMHTGPDHTPVQQPLEPVFHLNSLS</sequence>
<comment type="function">
    <text evidence="1">Involved in the anomeric conversion of L-rhamnose.</text>
</comment>
<comment type="catalytic activity">
    <reaction evidence="1">
        <text>alpha-L-rhamnose = beta-L-rhamnose</text>
        <dbReference type="Rhea" id="RHEA:25584"/>
        <dbReference type="ChEBI" id="CHEBI:27586"/>
        <dbReference type="ChEBI" id="CHEBI:27907"/>
        <dbReference type="EC" id="5.1.3.32"/>
    </reaction>
</comment>
<comment type="pathway">
    <text evidence="1">Carbohydrate metabolism; L-rhamnose metabolism.</text>
</comment>
<comment type="subunit">
    <text evidence="1">Homodimer.</text>
</comment>
<comment type="subcellular location">
    <subcellularLocation>
        <location evidence="1">Cytoplasm</location>
    </subcellularLocation>
</comment>
<comment type="similarity">
    <text evidence="1">Belongs to the rhamnose mutarotase family.</text>
</comment>
<keyword id="KW-0119">Carbohydrate metabolism</keyword>
<keyword id="KW-0963">Cytoplasm</keyword>
<keyword id="KW-0413">Isomerase</keyword>
<keyword id="KW-0684">Rhamnose metabolism</keyword>
<accession>B2TFM4</accession>
<dbReference type="EC" id="5.1.3.32" evidence="1"/>
<dbReference type="EMBL" id="CP001053">
    <property type="protein sequence ID" value="ACD20032.1"/>
    <property type="molecule type" value="Genomic_DNA"/>
</dbReference>
<dbReference type="RefSeq" id="WP_012427540.1">
    <property type="nucleotide sequence ID" value="NC_010676.1"/>
</dbReference>
<dbReference type="SMR" id="B2TFM4"/>
<dbReference type="STRING" id="398527.Bphyt_5686"/>
<dbReference type="KEGG" id="bpy:Bphyt_5686"/>
<dbReference type="eggNOG" id="COG3254">
    <property type="taxonomic scope" value="Bacteria"/>
</dbReference>
<dbReference type="HOGENOM" id="CLU_100689_2_0_4"/>
<dbReference type="OrthoDB" id="9799608at2"/>
<dbReference type="UniPathway" id="UPA00125"/>
<dbReference type="Proteomes" id="UP000001739">
    <property type="component" value="Chromosome 2"/>
</dbReference>
<dbReference type="GO" id="GO:0005737">
    <property type="term" value="C:cytoplasm"/>
    <property type="evidence" value="ECO:0007669"/>
    <property type="project" value="UniProtKB-SubCell"/>
</dbReference>
<dbReference type="GO" id="GO:0062192">
    <property type="term" value="F:L-rhamnose mutarotase activity"/>
    <property type="evidence" value="ECO:0007669"/>
    <property type="project" value="UniProtKB-EC"/>
</dbReference>
<dbReference type="GO" id="GO:0019301">
    <property type="term" value="P:rhamnose catabolic process"/>
    <property type="evidence" value="ECO:0007669"/>
    <property type="project" value="TreeGrafter"/>
</dbReference>
<dbReference type="Gene3D" id="3.30.70.100">
    <property type="match status" value="1"/>
</dbReference>
<dbReference type="HAMAP" id="MF_01663">
    <property type="entry name" value="L_rham_rotase"/>
    <property type="match status" value="1"/>
</dbReference>
<dbReference type="InterPro" id="IPR011008">
    <property type="entry name" value="Dimeric_a/b-barrel"/>
</dbReference>
<dbReference type="InterPro" id="IPR013448">
    <property type="entry name" value="L-rhamnose_mutarotase"/>
</dbReference>
<dbReference type="InterPro" id="IPR008000">
    <property type="entry name" value="Rham/fucose_mutarotase"/>
</dbReference>
<dbReference type="NCBIfam" id="TIGR02625">
    <property type="entry name" value="YiiL_rotase"/>
    <property type="match status" value="1"/>
</dbReference>
<dbReference type="PANTHER" id="PTHR34389">
    <property type="entry name" value="L-RHAMNOSE MUTAROTASE"/>
    <property type="match status" value="1"/>
</dbReference>
<dbReference type="PANTHER" id="PTHR34389:SF2">
    <property type="entry name" value="L-RHAMNOSE MUTAROTASE"/>
    <property type="match status" value="1"/>
</dbReference>
<dbReference type="Pfam" id="PF05336">
    <property type="entry name" value="rhaM"/>
    <property type="match status" value="1"/>
</dbReference>
<dbReference type="SUPFAM" id="SSF54909">
    <property type="entry name" value="Dimeric alpha+beta barrel"/>
    <property type="match status" value="1"/>
</dbReference>
<feature type="chain" id="PRO_1000187212" description="L-rhamnose mutarotase">
    <location>
        <begin position="1"/>
        <end position="107"/>
    </location>
</feature>
<feature type="active site" description="Proton donor" evidence="1">
    <location>
        <position position="22"/>
    </location>
</feature>
<feature type="binding site" evidence="1">
    <location>
        <position position="18"/>
    </location>
    <ligand>
        <name>substrate</name>
    </ligand>
</feature>
<feature type="binding site" evidence="1">
    <location>
        <position position="41"/>
    </location>
    <ligand>
        <name>substrate</name>
    </ligand>
</feature>
<feature type="binding site" evidence="1">
    <location>
        <begin position="76"/>
        <end position="77"/>
    </location>
    <ligand>
        <name>substrate</name>
    </ligand>
</feature>
<gene>
    <name evidence="1" type="primary">rhaM</name>
    <name type="ordered locus">Bphyt_5686</name>
</gene>
<evidence type="ECO:0000255" key="1">
    <source>
        <dbReference type="HAMAP-Rule" id="MF_01663"/>
    </source>
</evidence>
<reference key="1">
    <citation type="journal article" date="2011" name="J. Bacteriol.">
        <title>Complete genome sequence of the plant growth-promoting endophyte Burkholderia phytofirmans strain PsJN.</title>
        <authorList>
            <person name="Weilharter A."/>
            <person name="Mitter B."/>
            <person name="Shin M.V."/>
            <person name="Chain P.S."/>
            <person name="Nowak J."/>
            <person name="Sessitsch A."/>
        </authorList>
    </citation>
    <scope>NUCLEOTIDE SEQUENCE [LARGE SCALE GENOMIC DNA]</scope>
    <source>
        <strain>DSM 17436 / LMG 22146 / PsJN</strain>
    </source>
</reference>